<reference key="1">
    <citation type="journal article" date="2008" name="Appl. Environ. Microbiol.">
        <title>The genome of Polaromonas sp. strain JS666: insights into the evolution of a hydrocarbon- and xenobiotic-degrading bacterium, and features of relevance to biotechnology.</title>
        <authorList>
            <person name="Mattes T.E."/>
            <person name="Alexander A.K."/>
            <person name="Richardson P.M."/>
            <person name="Munk A.C."/>
            <person name="Han C.S."/>
            <person name="Stothard P."/>
            <person name="Coleman N.V."/>
        </authorList>
    </citation>
    <scope>NUCLEOTIDE SEQUENCE [LARGE SCALE GENOMIC DNA]</scope>
    <source>
        <strain>JS666 / ATCC BAA-500</strain>
    </source>
</reference>
<organism>
    <name type="scientific">Polaromonas sp. (strain JS666 / ATCC BAA-500)</name>
    <dbReference type="NCBI Taxonomy" id="296591"/>
    <lineage>
        <taxon>Bacteria</taxon>
        <taxon>Pseudomonadati</taxon>
        <taxon>Pseudomonadota</taxon>
        <taxon>Betaproteobacteria</taxon>
        <taxon>Burkholderiales</taxon>
        <taxon>Comamonadaceae</taxon>
        <taxon>Polaromonas</taxon>
    </lineage>
</organism>
<comment type="function">
    <text evidence="1">Catalyzes the reversible transfer of the terminal phosphate group between ATP and AMP. Plays an important role in cellular energy homeostasis and in adenine nucleotide metabolism.</text>
</comment>
<comment type="catalytic activity">
    <reaction evidence="1">
        <text>AMP + ATP = 2 ADP</text>
        <dbReference type="Rhea" id="RHEA:12973"/>
        <dbReference type="ChEBI" id="CHEBI:30616"/>
        <dbReference type="ChEBI" id="CHEBI:456215"/>
        <dbReference type="ChEBI" id="CHEBI:456216"/>
        <dbReference type="EC" id="2.7.4.3"/>
    </reaction>
</comment>
<comment type="pathway">
    <text evidence="1">Purine metabolism; AMP biosynthesis via salvage pathway; AMP from ADP: step 1/1.</text>
</comment>
<comment type="subunit">
    <text evidence="1">Monomer.</text>
</comment>
<comment type="subcellular location">
    <subcellularLocation>
        <location evidence="1">Cytoplasm</location>
    </subcellularLocation>
</comment>
<comment type="domain">
    <text evidence="1">Consists of three domains, a large central CORE domain and two small peripheral domains, NMPbind and LID, which undergo movements during catalysis. The LID domain closes over the site of phosphoryl transfer upon ATP binding. Assembling and dissambling the active center during each catalytic cycle provides an effective means to prevent ATP hydrolysis.</text>
</comment>
<comment type="similarity">
    <text evidence="1">Belongs to the adenylate kinase family.</text>
</comment>
<keyword id="KW-0067">ATP-binding</keyword>
<keyword id="KW-0963">Cytoplasm</keyword>
<keyword id="KW-0418">Kinase</keyword>
<keyword id="KW-0545">Nucleotide biosynthesis</keyword>
<keyword id="KW-0547">Nucleotide-binding</keyword>
<keyword id="KW-1185">Reference proteome</keyword>
<keyword id="KW-0808">Transferase</keyword>
<gene>
    <name evidence="1" type="primary">adk</name>
    <name type="ordered locus">Bpro_2952</name>
</gene>
<protein>
    <recommendedName>
        <fullName evidence="1">Adenylate kinase</fullName>
        <shortName evidence="1">AK</shortName>
        <ecNumber evidence="1">2.7.4.3</ecNumber>
    </recommendedName>
    <alternativeName>
        <fullName evidence="1">ATP-AMP transphosphorylase</fullName>
    </alternativeName>
    <alternativeName>
        <fullName evidence="1">ATP:AMP phosphotransferase</fullName>
    </alternativeName>
    <alternativeName>
        <fullName evidence="1">Adenylate monophosphate kinase</fullName>
    </alternativeName>
</protein>
<dbReference type="EC" id="2.7.4.3" evidence="1"/>
<dbReference type="EMBL" id="CP000316">
    <property type="protein sequence ID" value="ABE44866.1"/>
    <property type="molecule type" value="Genomic_DNA"/>
</dbReference>
<dbReference type="RefSeq" id="WP_011483864.1">
    <property type="nucleotide sequence ID" value="NC_007948.1"/>
</dbReference>
<dbReference type="SMR" id="Q129C6"/>
<dbReference type="STRING" id="296591.Bpro_2952"/>
<dbReference type="KEGG" id="pol:Bpro_2952"/>
<dbReference type="eggNOG" id="COG0563">
    <property type="taxonomic scope" value="Bacteria"/>
</dbReference>
<dbReference type="HOGENOM" id="CLU_032354_1_2_4"/>
<dbReference type="OrthoDB" id="9805030at2"/>
<dbReference type="UniPathway" id="UPA00588">
    <property type="reaction ID" value="UER00649"/>
</dbReference>
<dbReference type="Proteomes" id="UP000001983">
    <property type="component" value="Chromosome"/>
</dbReference>
<dbReference type="GO" id="GO:0005737">
    <property type="term" value="C:cytoplasm"/>
    <property type="evidence" value="ECO:0007669"/>
    <property type="project" value="UniProtKB-SubCell"/>
</dbReference>
<dbReference type="GO" id="GO:0004017">
    <property type="term" value="F:adenylate kinase activity"/>
    <property type="evidence" value="ECO:0007669"/>
    <property type="project" value="UniProtKB-UniRule"/>
</dbReference>
<dbReference type="GO" id="GO:0005524">
    <property type="term" value="F:ATP binding"/>
    <property type="evidence" value="ECO:0007669"/>
    <property type="project" value="UniProtKB-UniRule"/>
</dbReference>
<dbReference type="GO" id="GO:0044209">
    <property type="term" value="P:AMP salvage"/>
    <property type="evidence" value="ECO:0007669"/>
    <property type="project" value="UniProtKB-UniRule"/>
</dbReference>
<dbReference type="CDD" id="cd01428">
    <property type="entry name" value="ADK"/>
    <property type="match status" value="1"/>
</dbReference>
<dbReference type="FunFam" id="3.40.50.300:FF:000106">
    <property type="entry name" value="Adenylate kinase mitochondrial"/>
    <property type="match status" value="1"/>
</dbReference>
<dbReference type="Gene3D" id="3.40.50.300">
    <property type="entry name" value="P-loop containing nucleotide triphosphate hydrolases"/>
    <property type="match status" value="1"/>
</dbReference>
<dbReference type="HAMAP" id="MF_00235">
    <property type="entry name" value="Adenylate_kinase_Adk"/>
    <property type="match status" value="1"/>
</dbReference>
<dbReference type="InterPro" id="IPR006259">
    <property type="entry name" value="Adenyl_kin_sub"/>
</dbReference>
<dbReference type="InterPro" id="IPR000850">
    <property type="entry name" value="Adenylat/UMP-CMP_kin"/>
</dbReference>
<dbReference type="InterPro" id="IPR033690">
    <property type="entry name" value="Adenylat_kinase_CS"/>
</dbReference>
<dbReference type="InterPro" id="IPR007862">
    <property type="entry name" value="Adenylate_kinase_lid-dom"/>
</dbReference>
<dbReference type="InterPro" id="IPR027417">
    <property type="entry name" value="P-loop_NTPase"/>
</dbReference>
<dbReference type="NCBIfam" id="TIGR01351">
    <property type="entry name" value="adk"/>
    <property type="match status" value="1"/>
</dbReference>
<dbReference type="NCBIfam" id="NF001379">
    <property type="entry name" value="PRK00279.1-1"/>
    <property type="match status" value="1"/>
</dbReference>
<dbReference type="NCBIfam" id="NF001380">
    <property type="entry name" value="PRK00279.1-2"/>
    <property type="match status" value="1"/>
</dbReference>
<dbReference type="NCBIfam" id="NF001381">
    <property type="entry name" value="PRK00279.1-3"/>
    <property type="match status" value="1"/>
</dbReference>
<dbReference type="NCBIfam" id="NF011100">
    <property type="entry name" value="PRK14527.1"/>
    <property type="match status" value="1"/>
</dbReference>
<dbReference type="PANTHER" id="PTHR23359">
    <property type="entry name" value="NUCLEOTIDE KINASE"/>
    <property type="match status" value="1"/>
</dbReference>
<dbReference type="Pfam" id="PF00406">
    <property type="entry name" value="ADK"/>
    <property type="match status" value="1"/>
</dbReference>
<dbReference type="Pfam" id="PF05191">
    <property type="entry name" value="ADK_lid"/>
    <property type="match status" value="1"/>
</dbReference>
<dbReference type="PRINTS" id="PR00094">
    <property type="entry name" value="ADENYLTKNASE"/>
</dbReference>
<dbReference type="SUPFAM" id="SSF52540">
    <property type="entry name" value="P-loop containing nucleoside triphosphate hydrolases"/>
    <property type="match status" value="1"/>
</dbReference>
<dbReference type="PROSITE" id="PS00113">
    <property type="entry name" value="ADENYLATE_KINASE"/>
    <property type="match status" value="1"/>
</dbReference>
<proteinExistence type="inferred from homology"/>
<evidence type="ECO:0000255" key="1">
    <source>
        <dbReference type="HAMAP-Rule" id="MF_00235"/>
    </source>
</evidence>
<name>KAD_POLSJ</name>
<accession>Q129C6</accession>
<feature type="chain" id="PRO_1000058871" description="Adenylate kinase">
    <location>
        <begin position="1"/>
        <end position="218"/>
    </location>
</feature>
<feature type="region of interest" description="NMP" evidence="1">
    <location>
        <begin position="30"/>
        <end position="59"/>
    </location>
</feature>
<feature type="region of interest" description="LID" evidence="1">
    <location>
        <begin position="122"/>
        <end position="159"/>
    </location>
</feature>
<feature type="binding site" evidence="1">
    <location>
        <begin position="10"/>
        <end position="15"/>
    </location>
    <ligand>
        <name>ATP</name>
        <dbReference type="ChEBI" id="CHEBI:30616"/>
    </ligand>
</feature>
<feature type="binding site" evidence="1">
    <location>
        <position position="31"/>
    </location>
    <ligand>
        <name>AMP</name>
        <dbReference type="ChEBI" id="CHEBI:456215"/>
    </ligand>
</feature>
<feature type="binding site" evidence="1">
    <location>
        <position position="36"/>
    </location>
    <ligand>
        <name>AMP</name>
        <dbReference type="ChEBI" id="CHEBI:456215"/>
    </ligand>
</feature>
<feature type="binding site" evidence="1">
    <location>
        <begin position="57"/>
        <end position="59"/>
    </location>
    <ligand>
        <name>AMP</name>
        <dbReference type="ChEBI" id="CHEBI:456215"/>
    </ligand>
</feature>
<feature type="binding site" evidence="1">
    <location>
        <begin position="85"/>
        <end position="88"/>
    </location>
    <ligand>
        <name>AMP</name>
        <dbReference type="ChEBI" id="CHEBI:456215"/>
    </ligand>
</feature>
<feature type="binding site" evidence="1">
    <location>
        <position position="92"/>
    </location>
    <ligand>
        <name>AMP</name>
        <dbReference type="ChEBI" id="CHEBI:456215"/>
    </ligand>
</feature>
<feature type="binding site" evidence="1">
    <location>
        <position position="123"/>
    </location>
    <ligand>
        <name>ATP</name>
        <dbReference type="ChEBI" id="CHEBI:30616"/>
    </ligand>
</feature>
<feature type="binding site" evidence="1">
    <location>
        <begin position="132"/>
        <end position="133"/>
    </location>
    <ligand>
        <name>ATP</name>
        <dbReference type="ChEBI" id="CHEBI:30616"/>
    </ligand>
</feature>
<feature type="binding site" evidence="1">
    <location>
        <position position="156"/>
    </location>
    <ligand>
        <name>AMP</name>
        <dbReference type="ChEBI" id="CHEBI:456215"/>
    </ligand>
</feature>
<feature type="binding site" evidence="1">
    <location>
        <position position="167"/>
    </location>
    <ligand>
        <name>AMP</name>
        <dbReference type="ChEBI" id="CHEBI:456215"/>
    </ligand>
</feature>
<feature type="binding site" evidence="1">
    <location>
        <position position="203"/>
    </location>
    <ligand>
        <name>ATP</name>
        <dbReference type="ChEBI" id="CHEBI:30616"/>
    </ligand>
</feature>
<sequence length="218" mass="23791">MRLILLGAPGAGKGTQATFICQKYGIPQISTGDMLRAAVKAGTPLGVEAKKIMDAGALVSDDLIINLVKERIAQPDCAKGFLFDGFPRTIPQADAMKAAGVKIDYVLEIDVPFEAIIERMSGRRSHTASGRTYHVKYNPPKVEGKDDVTGEPLIQREDDKEETVRKRLEVYSAQTRPLVEYYSSWAKTSPQAAPKYRAISGMGGVDEITERAFQALSS</sequence>